<reference key="1">
    <citation type="journal article" date="1992" name="Biochemistry">
        <title>Sequence of a cDNA clone encoding the zinc metalloproteinase hemorrhagic toxin e from Crotalus atrox: evidence for signal, zymogen, and disintegrin-like structures.</title>
        <authorList>
            <person name="Hite L.A."/>
            <person name="Shannon J.D."/>
            <person name="Bjarnason J.B."/>
            <person name="Fox J.W."/>
        </authorList>
    </citation>
    <scope>NUCLEOTIDE SEQUENCE [MRNA]</scope>
    <source>
        <tissue>Venom gland</tissue>
    </source>
</reference>
<reference key="2">
    <citation type="journal article" date="1992" name="Biol. Chem. Hoppe-Seyler">
        <title>A new family of proteinases is defined by several snake venom metalloproteinases.</title>
        <authorList>
            <person name="Hite L.A."/>
            <person name="Fox J.W."/>
            <person name="Bjarnason J.B."/>
        </authorList>
    </citation>
    <scope>SIMILARITY</scope>
    <source>
        <tissue>Venom</tissue>
    </source>
</reference>
<reference key="3">
    <citation type="journal article" date="1998" name="Arch. Biochem. Biophys.">
        <title>Isolation, sequence analysis, and biological activity of atrolysin E/D, the non-RGD disintegrin domain from Crotalus atrox venom.</title>
        <authorList>
            <person name="Shimokawa K."/>
            <person name="Jia L.G."/>
            <person name="Shannon J.D."/>
            <person name="Fox J.W."/>
        </authorList>
    </citation>
    <scope>PROTEIN SEQUENCE OF 408-475 (DISINTEGRIN)</scope>
    <scope>FUNCTION</scope>
    <scope>SYNTHESIS OF</scope>
    <scope>MASS SPECTROMETRY</scope>
    <scope>SYNTHETIC CYCLIZATION</scope>
    <scope>SUBCELLULAR LOCATION</scope>
    <source>
        <tissue>Venom</tissue>
    </source>
</reference>
<reference key="4">
    <citation type="journal article" date="2009" name="J. Proteome Res.">
        <title>Exploring the venom proteome of the western diamondback rattlesnake, Crotalus atrox, via snake venomics and combinatorial peptide ligand library approaches.</title>
        <authorList>
            <person name="Calvete J.J."/>
            <person name="Fasoli E."/>
            <person name="Sanz L."/>
            <person name="Boschetti E."/>
            <person name="Righetti P.G."/>
        </authorList>
    </citation>
    <scope>PROTEIN SEQUENCE OF 261-269; 277-297; 309-337; 408-444 AND 454-473</scope>
    <scope>MASS SPECTROMETRY</scope>
    <scope>SUBCELLULAR LOCATION</scope>
    <source>
        <tissue>Venom</tissue>
    </source>
</reference>
<reference key="5">
    <citation type="journal article" date="1989" name="Arch. Biochem. Biophys.">
        <title>Degradation of extracellular matrix proteins by hemorrhagic metalloproteinases.</title>
        <authorList>
            <person name="Baramova E.N."/>
            <person name="Shannon J.D."/>
            <person name="Bjarnason J.B."/>
            <person name="Fox J.W."/>
        </authorList>
    </citation>
    <scope>FUNCTION</scope>
</reference>
<reference key="6">
    <citation type="journal article" date="1996" name="Arch. Biochem. Biophys.">
        <title>Expression, activation, and processing of the recombinant snake venom metalloproteinase, pro-atrolysin E.</title>
        <authorList>
            <person name="Shimokawa K."/>
            <person name="Jia L.G."/>
            <person name="Wang X.M."/>
            <person name="Fox J.W."/>
        </authorList>
    </citation>
    <scope>ACTIVATION OF ATROLYSIN-E</scope>
</reference>
<feature type="signal peptide" evidence="4">
    <location>
        <begin position="1"/>
        <end position="20"/>
    </location>
</feature>
<feature type="propeptide" id="PRO_0000029003" evidence="1">
    <location>
        <begin position="21"/>
        <end position="187"/>
    </location>
</feature>
<feature type="chain" id="PRO_0000029004" description="Snake venom metalloproteinase atrolysin-E">
    <location>
        <begin position="188"/>
        <end position="389"/>
    </location>
</feature>
<feature type="propeptide" id="PRO_0000407579" evidence="7 9">
    <location>
        <begin position="390"/>
        <end position="407"/>
    </location>
</feature>
<feature type="chain" id="PRO_0000407580" description="Disintegrin atrolysin-E (3-73)">
    <location>
        <begin position="408"/>
        <end position="478"/>
    </location>
</feature>
<feature type="chain" id="PRO_0000029005" description="Disintegrin atrolysin-E">
    <location>
        <begin position="408"/>
        <end position="475"/>
    </location>
</feature>
<feature type="chain" id="PRO_0000407581" description="Disintegrin atrolysin-E (4-73)">
    <location>
        <begin position="409"/>
        <end position="478"/>
    </location>
</feature>
<feature type="domain" description="Peptidase M12B" evidence="6">
    <location>
        <begin position="193"/>
        <end position="389"/>
    </location>
</feature>
<feature type="domain" description="Disintegrin" evidence="5">
    <location>
        <begin position="397"/>
        <end position="478"/>
    </location>
</feature>
<feature type="short sequence motif" description="Cell attachment site; atypical (MVD)">
    <location>
        <begin position="456"/>
        <end position="458"/>
    </location>
</feature>
<feature type="active site" evidence="6">
    <location>
        <position position="330"/>
    </location>
</feature>
<feature type="binding site" evidence="6">
    <location>
        <position position="329"/>
    </location>
    <ligand>
        <name>Zn(2+)</name>
        <dbReference type="ChEBI" id="CHEBI:29105"/>
        <note>catalytic</note>
    </ligand>
</feature>
<feature type="binding site" evidence="6">
    <location>
        <position position="333"/>
    </location>
    <ligand>
        <name>Zn(2+)</name>
        <dbReference type="ChEBI" id="CHEBI:29105"/>
        <note>catalytic</note>
    </ligand>
</feature>
<feature type="binding site" evidence="6">
    <location>
        <position position="339"/>
    </location>
    <ligand>
        <name>Zn(2+)</name>
        <dbReference type="ChEBI" id="CHEBI:29105"/>
        <note>catalytic</note>
    </ligand>
</feature>
<feature type="disulfide bond" evidence="6">
    <location>
        <begin position="304"/>
        <end position="384"/>
    </location>
</feature>
<feature type="disulfide bond" evidence="6">
    <location>
        <begin position="344"/>
        <end position="368"/>
    </location>
</feature>
<feature type="disulfide bond" evidence="6">
    <location>
        <begin position="346"/>
        <end position="351"/>
    </location>
</feature>
<feature type="disulfide bond" evidence="2">
    <location>
        <begin position="411"/>
        <end position="426"/>
    </location>
</feature>
<feature type="disulfide bond" evidence="2">
    <location>
        <begin position="413"/>
        <end position="421"/>
    </location>
</feature>
<feature type="disulfide bond" evidence="2">
    <location>
        <begin position="420"/>
        <end position="443"/>
    </location>
</feature>
<feature type="disulfide bond" evidence="2">
    <location>
        <begin position="434"/>
        <end position="440"/>
    </location>
</feature>
<feature type="disulfide bond" evidence="2">
    <location>
        <begin position="439"/>
        <end position="464"/>
    </location>
</feature>
<feature type="disulfide bond" evidence="2 5">
    <location>
        <begin position="452"/>
        <end position="471"/>
    </location>
</feature>
<feature type="sequence conflict" description="In Ref. 4; AA sequence." evidence="10" ref="4">
    <location>
        <position position="296"/>
    </location>
</feature>
<protein>
    <recommendedName>
        <fullName>Zinc metalloproteinase/disintegrin</fullName>
    </recommendedName>
    <component>
        <recommendedName>
            <fullName>Snake venom metalloproteinase atrolysin-E</fullName>
            <shortName>SVMP</shortName>
            <ecNumber>3.4.24.44</ecNumber>
        </recommendedName>
        <alternativeName>
            <fullName>Hemorrhagic metalloproteinase HT-E</fullName>
        </alternativeName>
        <alternativeName>
            <fullName>Hemorrhagic toxin E</fullName>
        </alternativeName>
    </component>
    <component>
        <recommendedName>
            <fullName>Disintegrin atrolysin-E</fullName>
        </recommendedName>
        <alternativeName>
            <fullName>Atrolysin-E disintegrin</fullName>
            <shortName>Atrolysin E/D</shortName>
        </alternativeName>
    </component>
    <component>
        <recommendedName>
            <fullName>Disintegrin atrolysin-E (4-73)</fullName>
        </recommendedName>
    </component>
    <component>
        <recommendedName>
            <fullName>Disintegrin atrolysin-E (3-73)</fullName>
        </recommendedName>
    </component>
</protein>
<name>VM2AE_CROAT</name>
<organism>
    <name type="scientific">Crotalus atrox</name>
    <name type="common">Western diamondback rattlesnake</name>
    <dbReference type="NCBI Taxonomy" id="8730"/>
    <lineage>
        <taxon>Eukaryota</taxon>
        <taxon>Metazoa</taxon>
        <taxon>Chordata</taxon>
        <taxon>Craniata</taxon>
        <taxon>Vertebrata</taxon>
        <taxon>Euteleostomi</taxon>
        <taxon>Lepidosauria</taxon>
        <taxon>Squamata</taxon>
        <taxon>Bifurcata</taxon>
        <taxon>Unidentata</taxon>
        <taxon>Episquamata</taxon>
        <taxon>Toxicofera</taxon>
        <taxon>Serpentes</taxon>
        <taxon>Colubroidea</taxon>
        <taxon>Viperidae</taxon>
        <taxon>Crotalinae</taxon>
        <taxon>Crotalus</taxon>
    </lineage>
</organism>
<keyword id="KW-1217">Cell adhesion impairing toxin</keyword>
<keyword id="KW-0177">Collagen degradation</keyword>
<keyword id="KW-0903">Direct protein sequencing</keyword>
<keyword id="KW-1015">Disulfide bond</keyword>
<keyword id="KW-1200">Hemorrhagic toxin</keyword>
<keyword id="KW-1199">Hemostasis impairing toxin</keyword>
<keyword id="KW-0378">Hydrolase</keyword>
<keyword id="KW-0479">Metal-binding</keyword>
<keyword id="KW-0482">Metalloprotease</keyword>
<keyword id="KW-1201">Platelet aggregation inhibiting toxin</keyword>
<keyword id="KW-0645">Protease</keyword>
<keyword id="KW-0964">Secreted</keyword>
<keyword id="KW-0732">Signal</keyword>
<keyword id="KW-0800">Toxin</keyword>
<keyword id="KW-0862">Zinc</keyword>
<keyword id="KW-0865">Zymogen</keyword>
<accession>P34182</accession>
<dbReference type="EC" id="3.4.24.44"/>
<dbReference type="EMBL" id="M89784">
    <property type="protein sequence ID" value="AAB00731.1"/>
    <property type="molecule type" value="mRNA"/>
</dbReference>
<dbReference type="PIR" id="A43296">
    <property type="entry name" value="A43296"/>
</dbReference>
<dbReference type="SMR" id="P34182"/>
<dbReference type="MEROPS" id="M12.145"/>
<dbReference type="BRENDA" id="3.4.24.1">
    <property type="organism ID" value="1710"/>
</dbReference>
<dbReference type="GO" id="GO:0005576">
    <property type="term" value="C:extracellular region"/>
    <property type="evidence" value="ECO:0007669"/>
    <property type="project" value="UniProtKB-SubCell"/>
</dbReference>
<dbReference type="GO" id="GO:0005886">
    <property type="term" value="C:plasma membrane"/>
    <property type="evidence" value="ECO:0007669"/>
    <property type="project" value="TreeGrafter"/>
</dbReference>
<dbReference type="GO" id="GO:0046872">
    <property type="term" value="F:metal ion binding"/>
    <property type="evidence" value="ECO:0007669"/>
    <property type="project" value="UniProtKB-KW"/>
</dbReference>
<dbReference type="GO" id="GO:0004222">
    <property type="term" value="F:metalloendopeptidase activity"/>
    <property type="evidence" value="ECO:0007669"/>
    <property type="project" value="InterPro"/>
</dbReference>
<dbReference type="GO" id="GO:0090729">
    <property type="term" value="F:toxin activity"/>
    <property type="evidence" value="ECO:0007669"/>
    <property type="project" value="UniProtKB-KW"/>
</dbReference>
<dbReference type="GO" id="GO:0030574">
    <property type="term" value="P:collagen catabolic process"/>
    <property type="evidence" value="ECO:0007669"/>
    <property type="project" value="UniProtKB-KW"/>
</dbReference>
<dbReference type="GO" id="GO:0006508">
    <property type="term" value="P:proteolysis"/>
    <property type="evidence" value="ECO:0007669"/>
    <property type="project" value="UniProtKB-KW"/>
</dbReference>
<dbReference type="CDD" id="cd04269">
    <property type="entry name" value="ZnMc_adamalysin_II_like"/>
    <property type="match status" value="1"/>
</dbReference>
<dbReference type="FunFam" id="3.40.390.10:FF:000002">
    <property type="entry name" value="Disintegrin and metalloproteinase domain-containing protein 22"/>
    <property type="match status" value="1"/>
</dbReference>
<dbReference type="Gene3D" id="3.40.390.10">
    <property type="entry name" value="Collagenase (Catalytic Domain)"/>
    <property type="match status" value="1"/>
</dbReference>
<dbReference type="Gene3D" id="4.10.70.10">
    <property type="entry name" value="Disintegrin domain"/>
    <property type="match status" value="1"/>
</dbReference>
<dbReference type="InterPro" id="IPR018358">
    <property type="entry name" value="Disintegrin_CS"/>
</dbReference>
<dbReference type="InterPro" id="IPR001762">
    <property type="entry name" value="Disintegrin_dom"/>
</dbReference>
<dbReference type="InterPro" id="IPR036436">
    <property type="entry name" value="Disintegrin_dom_sf"/>
</dbReference>
<dbReference type="InterPro" id="IPR024079">
    <property type="entry name" value="MetalloPept_cat_dom_sf"/>
</dbReference>
<dbReference type="InterPro" id="IPR001590">
    <property type="entry name" value="Peptidase_M12B"/>
</dbReference>
<dbReference type="InterPro" id="IPR002870">
    <property type="entry name" value="Peptidase_M12B_N"/>
</dbReference>
<dbReference type="InterPro" id="IPR034027">
    <property type="entry name" value="Reprolysin_adamalysin"/>
</dbReference>
<dbReference type="PANTHER" id="PTHR11905">
    <property type="entry name" value="ADAM A DISINTEGRIN AND METALLOPROTEASE DOMAIN"/>
    <property type="match status" value="1"/>
</dbReference>
<dbReference type="PANTHER" id="PTHR11905:SF32">
    <property type="entry name" value="DISINTEGRIN AND METALLOPROTEINASE DOMAIN-CONTAINING PROTEIN 28"/>
    <property type="match status" value="1"/>
</dbReference>
<dbReference type="Pfam" id="PF00200">
    <property type="entry name" value="Disintegrin"/>
    <property type="match status" value="1"/>
</dbReference>
<dbReference type="Pfam" id="PF01562">
    <property type="entry name" value="Pep_M12B_propep"/>
    <property type="match status" value="1"/>
</dbReference>
<dbReference type="Pfam" id="PF01421">
    <property type="entry name" value="Reprolysin"/>
    <property type="match status" value="1"/>
</dbReference>
<dbReference type="PRINTS" id="PR00289">
    <property type="entry name" value="DISINTEGRIN"/>
</dbReference>
<dbReference type="SMART" id="SM00050">
    <property type="entry name" value="DISIN"/>
    <property type="match status" value="1"/>
</dbReference>
<dbReference type="SUPFAM" id="SSF57552">
    <property type="entry name" value="Blood coagulation inhibitor (disintegrin)"/>
    <property type="match status" value="1"/>
</dbReference>
<dbReference type="SUPFAM" id="SSF55486">
    <property type="entry name" value="Metalloproteases ('zincins'), catalytic domain"/>
    <property type="match status" value="1"/>
</dbReference>
<dbReference type="PROSITE" id="PS50215">
    <property type="entry name" value="ADAM_MEPRO"/>
    <property type="match status" value="1"/>
</dbReference>
<dbReference type="PROSITE" id="PS00427">
    <property type="entry name" value="DISINTEGRIN_1"/>
    <property type="match status" value="1"/>
</dbReference>
<dbReference type="PROSITE" id="PS50214">
    <property type="entry name" value="DISINTEGRIN_2"/>
    <property type="match status" value="1"/>
</dbReference>
<dbReference type="PROSITE" id="PS00142">
    <property type="entry name" value="ZINC_PROTEASE"/>
    <property type="match status" value="1"/>
</dbReference>
<sequence length="478" mass="53638">MIQVLLVTICLAAFPYQGSSIILESGNVNDYEVIYPRKVTALPKGAVQPKYEDTMQYELKVNGEPVVLHLEKNKGLFSKDYSETHYSFDGRKITTNPSVEDHCYYHGRIENDADSTASISACNGLKGHFKLQGEMYLIEPLKLSDSEAHAVFKLKNVEKEDEAPKMCGVTQNWESYEPIKKASDLNLNPEHQRYVELFIVVDHGMYTKYNGDSDKIRQRVHQMVNIMKESYTYMYIDILLAGIEIWSNGDLINVQPASPNTLNSFGEWRETDLLKRKSHDNAQLLTSIAFDEQIIGRAYIGGICDPKRSTGVVQDHSEINLRVAVTMTHELGHNLGIHHDTDSCSCGGYSCIMSPVISDEPSKYFSDCSYIQCWEFIMNQKPQCILKKPLRTDTVSTPVSGNELLEAGIECDCGSLENPCCYATTCKMRPGSQCAEGLCCDQCRFMKKGTVCRVSMVDRNDDTCTGQSADCPRNGLYG</sequence>
<comment type="function">
    <molecule>Snake venom metalloproteinase atrolysin-E</molecule>
    <text evidence="8">Snake venom zinc metalloproteinase that causes hemorrhage by provoking the degradation of the sub-endothelial matrix proteins (fibronectin, laminin, type IV collagen, nidogen, and gelatins).</text>
</comment>
<comment type="function">
    <molecule>Disintegrin atrolysin-E</molecule>
    <text evidence="9">Potent inhibitor of both collagen- (IC(50)=4 nM) and ADP-induced (IC(50)=8 nM) platelet aggregation. May act by binding to the platelet receptor GPIIb/GPIIIa (ITGA2B/ITGB3).</text>
</comment>
<comment type="catalytic activity">
    <reaction>
        <text>Cleavage of 3-Asn-|-Gln-4, 9-Ser-|-His-10 and 14-Ala-|-Leu-15 bonds in insulin B chain and 14-Tyr-|-Gln-15 and 8-Thr-|-Ser-9 in A chain. Cleaves type IV collagen at 73-Ala-|-Gln-74 in alpha1-(IV) and at 7-Gly-|-Leu-8 in alpha2-(IV).</text>
        <dbReference type="EC" id="3.4.24.44"/>
    </reaction>
</comment>
<comment type="cofactor">
    <cofactor evidence="10">
        <name>Zn(2+)</name>
        <dbReference type="ChEBI" id="CHEBI:29105"/>
    </cofactor>
    <text evidence="10">Binds 1 zinc ion per subunit.</text>
</comment>
<comment type="subunit">
    <text evidence="3">Monomer (disintegrin).</text>
</comment>
<comment type="subcellular location">
    <subcellularLocation>
        <location evidence="7 9">Secreted</location>
    </subcellularLocation>
</comment>
<comment type="tissue specificity">
    <text evidence="11 12">Expressed by the venom gland.</text>
</comment>
<comment type="mass spectrometry" mass="7392.0" method="MALDI" evidence="9">
    <molecule>Disintegrin atrolysin-E</molecule>
</comment>
<comment type="mass spectrometry" mass="7641.4" method="Unknown" evidence="7">
    <molecule>Disintegrin atrolysin-E (3-73)</molecule>
    <text>Average mass.</text>
</comment>
<comment type="mass spectrometry" mass="7584.6" method="Unknown" evidence="7">
    <molecule>Disintegrin atrolysin-E (4-73)</molecule>
    <text>Average mass.</text>
</comment>
<comment type="miscellaneous">
    <text>Pro-atrolysin-E can be enzymatically activated by venom, atrolysin-A and atrolysin-E itself.</text>
</comment>
<comment type="miscellaneous">
    <text>The disintegrin belongs to the medium disintegrin subfamily.</text>
</comment>
<comment type="similarity">
    <text evidence="10">Belongs to the venom metalloproteinase (M12B) family. P-II subfamily. P-IIa sub-subfamily.</text>
</comment>
<comment type="caution">
    <text evidence="10">See also the NCBI entry AAB23201 which has been created from PubMed:1515064.</text>
</comment>
<evidence type="ECO:0000250" key="1"/>
<evidence type="ECO:0000250" key="2">
    <source>
        <dbReference type="UniProtKB" id="Q0NZX5"/>
    </source>
</evidence>
<evidence type="ECO:0000250" key="3">
    <source>
        <dbReference type="UniProtKB" id="Q90WC0"/>
    </source>
</evidence>
<evidence type="ECO:0000255" key="4"/>
<evidence type="ECO:0000255" key="5">
    <source>
        <dbReference type="PROSITE-ProRule" id="PRU00068"/>
    </source>
</evidence>
<evidence type="ECO:0000255" key="6">
    <source>
        <dbReference type="PROSITE-ProRule" id="PRU00276"/>
    </source>
</evidence>
<evidence type="ECO:0000269" key="7">
    <source>
    </source>
</evidence>
<evidence type="ECO:0000269" key="8">
    <source>
    </source>
</evidence>
<evidence type="ECO:0000269" key="9">
    <source>
    </source>
</evidence>
<evidence type="ECO:0000305" key="10"/>
<evidence type="ECO:0000305" key="11">
    <source>
    </source>
</evidence>
<evidence type="ECO:0000305" key="12">
    <source>
    </source>
</evidence>
<proteinExistence type="evidence at protein level"/>